<accession>A9WGS3</accession>
<protein>
    <recommendedName>
        <fullName evidence="1">ATP synthase epsilon chain</fullName>
    </recommendedName>
    <alternativeName>
        <fullName evidence="1">ATP synthase F1 sector epsilon subunit</fullName>
    </alternativeName>
    <alternativeName>
        <fullName evidence="1">F-ATPase epsilon subunit</fullName>
    </alternativeName>
</protein>
<proteinExistence type="inferred from homology"/>
<sequence>MPIHLEIVTAERVILSDDVDMISAPTKDGRVGILPRHAPLMTILEPGELDIIKNGERTPFAVSGGFMEVLPHRVTILADTVERADEIDEARAEQARAEAEARRREAQSERDMALAEAKLRKEMVRLRVAQLHKIKRRQS</sequence>
<feature type="chain" id="PRO_1000146316" description="ATP synthase epsilon chain">
    <location>
        <begin position="1"/>
        <end position="139"/>
    </location>
</feature>
<feature type="region of interest" description="Disordered" evidence="2">
    <location>
        <begin position="89"/>
        <end position="110"/>
    </location>
</feature>
<reference key="1">
    <citation type="journal article" date="2011" name="BMC Genomics">
        <title>Complete genome sequence of the filamentous anoxygenic phototrophic bacterium Chloroflexus aurantiacus.</title>
        <authorList>
            <person name="Tang K.H."/>
            <person name="Barry K."/>
            <person name="Chertkov O."/>
            <person name="Dalin E."/>
            <person name="Han C.S."/>
            <person name="Hauser L.J."/>
            <person name="Honchak B.M."/>
            <person name="Karbach L.E."/>
            <person name="Land M.L."/>
            <person name="Lapidus A."/>
            <person name="Larimer F.W."/>
            <person name="Mikhailova N."/>
            <person name="Pitluck S."/>
            <person name="Pierson B.K."/>
            <person name="Blankenship R.E."/>
        </authorList>
    </citation>
    <scope>NUCLEOTIDE SEQUENCE [LARGE SCALE GENOMIC DNA]</scope>
    <source>
        <strain>ATCC 29366 / DSM 635 / J-10-fl</strain>
    </source>
</reference>
<comment type="function">
    <text evidence="1">Produces ATP from ADP in the presence of a proton gradient across the membrane.</text>
</comment>
<comment type="subunit">
    <text evidence="1">F-type ATPases have 2 components, CF(1) - the catalytic core - and CF(0) - the membrane proton channel. CF(1) has five subunits: alpha(3), beta(3), gamma(1), delta(1), epsilon(1). CF(0) has three main subunits: a, b and c.</text>
</comment>
<comment type="subcellular location">
    <subcellularLocation>
        <location evidence="1">Cell membrane</location>
        <topology evidence="1">Peripheral membrane protein</topology>
    </subcellularLocation>
</comment>
<comment type="similarity">
    <text evidence="1">Belongs to the ATPase epsilon chain family.</text>
</comment>
<dbReference type="EMBL" id="CP000909">
    <property type="protein sequence ID" value="ABY36239.1"/>
    <property type="molecule type" value="Genomic_DNA"/>
</dbReference>
<dbReference type="RefSeq" id="WP_012258892.1">
    <property type="nucleotide sequence ID" value="NC_010175.1"/>
</dbReference>
<dbReference type="RefSeq" id="YP_001636628.1">
    <property type="nucleotide sequence ID" value="NC_010175.1"/>
</dbReference>
<dbReference type="SMR" id="A9WGS3"/>
<dbReference type="FunCoup" id="A9WGS3">
    <property type="interactions" value="434"/>
</dbReference>
<dbReference type="STRING" id="324602.Caur_3040"/>
<dbReference type="EnsemblBacteria" id="ABY36239">
    <property type="protein sequence ID" value="ABY36239"/>
    <property type="gene ID" value="Caur_3040"/>
</dbReference>
<dbReference type="KEGG" id="cau:Caur_3040"/>
<dbReference type="PATRIC" id="fig|324602.8.peg.3441"/>
<dbReference type="eggNOG" id="COG0355">
    <property type="taxonomic scope" value="Bacteria"/>
</dbReference>
<dbReference type="HOGENOM" id="CLU_084338_1_3_0"/>
<dbReference type="InParanoid" id="A9WGS3"/>
<dbReference type="Proteomes" id="UP000002008">
    <property type="component" value="Chromosome"/>
</dbReference>
<dbReference type="GO" id="GO:0005886">
    <property type="term" value="C:plasma membrane"/>
    <property type="evidence" value="ECO:0007669"/>
    <property type="project" value="UniProtKB-SubCell"/>
</dbReference>
<dbReference type="GO" id="GO:0045259">
    <property type="term" value="C:proton-transporting ATP synthase complex"/>
    <property type="evidence" value="ECO:0007669"/>
    <property type="project" value="UniProtKB-KW"/>
</dbReference>
<dbReference type="GO" id="GO:0005524">
    <property type="term" value="F:ATP binding"/>
    <property type="evidence" value="ECO:0007669"/>
    <property type="project" value="UniProtKB-UniRule"/>
</dbReference>
<dbReference type="GO" id="GO:0046933">
    <property type="term" value="F:proton-transporting ATP synthase activity, rotational mechanism"/>
    <property type="evidence" value="ECO:0007669"/>
    <property type="project" value="UniProtKB-UniRule"/>
</dbReference>
<dbReference type="GO" id="GO:0015986">
    <property type="term" value="P:proton motive force-driven ATP synthesis"/>
    <property type="evidence" value="ECO:0000318"/>
    <property type="project" value="GO_Central"/>
</dbReference>
<dbReference type="CDD" id="cd12152">
    <property type="entry name" value="F1-ATPase_delta"/>
    <property type="match status" value="1"/>
</dbReference>
<dbReference type="Gene3D" id="2.60.15.10">
    <property type="entry name" value="F0F1 ATP synthase delta/epsilon subunit, N-terminal"/>
    <property type="match status" value="1"/>
</dbReference>
<dbReference type="HAMAP" id="MF_00530">
    <property type="entry name" value="ATP_synth_epsil_bac"/>
    <property type="match status" value="1"/>
</dbReference>
<dbReference type="InterPro" id="IPR036794">
    <property type="entry name" value="ATP_F1_dsu/esu_C_sf"/>
</dbReference>
<dbReference type="InterPro" id="IPR001469">
    <property type="entry name" value="ATP_synth_F1_dsu/esu"/>
</dbReference>
<dbReference type="InterPro" id="IPR020546">
    <property type="entry name" value="ATP_synth_F1_dsu/esu_N"/>
</dbReference>
<dbReference type="InterPro" id="IPR020547">
    <property type="entry name" value="ATP_synth_F1_esu_C"/>
</dbReference>
<dbReference type="InterPro" id="IPR036771">
    <property type="entry name" value="ATPsynth_dsu/esu_N"/>
</dbReference>
<dbReference type="NCBIfam" id="TIGR01216">
    <property type="entry name" value="ATP_synt_epsi"/>
    <property type="match status" value="1"/>
</dbReference>
<dbReference type="NCBIfam" id="NF009980">
    <property type="entry name" value="PRK13446.1"/>
    <property type="match status" value="1"/>
</dbReference>
<dbReference type="NCBIfam" id="NF011322">
    <property type="entry name" value="PRK14735.1"/>
    <property type="match status" value="1"/>
</dbReference>
<dbReference type="PANTHER" id="PTHR13822">
    <property type="entry name" value="ATP SYNTHASE DELTA/EPSILON CHAIN"/>
    <property type="match status" value="1"/>
</dbReference>
<dbReference type="PANTHER" id="PTHR13822:SF10">
    <property type="entry name" value="ATP SYNTHASE EPSILON CHAIN, CHLOROPLASTIC"/>
    <property type="match status" value="1"/>
</dbReference>
<dbReference type="Pfam" id="PF00401">
    <property type="entry name" value="ATP-synt_DE"/>
    <property type="match status" value="1"/>
</dbReference>
<dbReference type="Pfam" id="PF02823">
    <property type="entry name" value="ATP-synt_DE_N"/>
    <property type="match status" value="1"/>
</dbReference>
<dbReference type="SUPFAM" id="SSF46604">
    <property type="entry name" value="Epsilon subunit of F1F0-ATP synthase C-terminal domain"/>
    <property type="match status" value="1"/>
</dbReference>
<dbReference type="SUPFAM" id="SSF51344">
    <property type="entry name" value="Epsilon subunit of F1F0-ATP synthase N-terminal domain"/>
    <property type="match status" value="1"/>
</dbReference>
<organism>
    <name type="scientific">Chloroflexus aurantiacus (strain ATCC 29366 / DSM 635 / J-10-fl)</name>
    <dbReference type="NCBI Taxonomy" id="324602"/>
    <lineage>
        <taxon>Bacteria</taxon>
        <taxon>Bacillati</taxon>
        <taxon>Chloroflexota</taxon>
        <taxon>Chloroflexia</taxon>
        <taxon>Chloroflexales</taxon>
        <taxon>Chloroflexineae</taxon>
        <taxon>Chloroflexaceae</taxon>
        <taxon>Chloroflexus</taxon>
    </lineage>
</organism>
<name>ATPE_CHLAA</name>
<evidence type="ECO:0000255" key="1">
    <source>
        <dbReference type="HAMAP-Rule" id="MF_00530"/>
    </source>
</evidence>
<evidence type="ECO:0000256" key="2">
    <source>
        <dbReference type="SAM" id="MobiDB-lite"/>
    </source>
</evidence>
<keyword id="KW-0066">ATP synthesis</keyword>
<keyword id="KW-1003">Cell membrane</keyword>
<keyword id="KW-0139">CF(1)</keyword>
<keyword id="KW-0375">Hydrogen ion transport</keyword>
<keyword id="KW-0406">Ion transport</keyword>
<keyword id="KW-0472">Membrane</keyword>
<keyword id="KW-1185">Reference proteome</keyword>
<keyword id="KW-0813">Transport</keyword>
<gene>
    <name evidence="1" type="primary">atpC</name>
    <name type="ordered locus">Caur_3040</name>
</gene>